<gene>
    <name evidence="1" type="primary">dgt</name>
    <name type="ordered locus">ECDH10B_0140</name>
</gene>
<accession>B1XD30</accession>
<keyword id="KW-0378">Hydrolase</keyword>
<keyword id="KW-0460">Magnesium</keyword>
<protein>
    <recommendedName>
        <fullName evidence="1">Deoxyguanosinetriphosphate triphosphohydrolase</fullName>
        <shortName evidence="1">dGTP triphosphohydrolase</shortName>
        <shortName evidence="1">dGTPase</shortName>
        <ecNumber evidence="1">3.1.5.1</ecNumber>
    </recommendedName>
</protein>
<name>DGTP_ECODH</name>
<feature type="chain" id="PRO_1000090260" description="Deoxyguanosinetriphosphate triphosphohydrolase">
    <location>
        <begin position="1"/>
        <end position="505"/>
    </location>
</feature>
<feature type="domain" description="HD" evidence="2">
    <location>
        <begin position="66"/>
        <end position="273"/>
    </location>
</feature>
<evidence type="ECO:0000255" key="1">
    <source>
        <dbReference type="HAMAP-Rule" id="MF_00030"/>
    </source>
</evidence>
<evidence type="ECO:0000255" key="2">
    <source>
        <dbReference type="PROSITE-ProRule" id="PRU01175"/>
    </source>
</evidence>
<sequence>MAQIDFRKKINWHRRYRSPQGVKTEHEILRIFESDRGRIINSPAIRRLQQKTQVFPLERNAAVRTRLTHSMEVQQVGRYIAKEILSRLKELKLLEAYGLDELTGPFESIVEMSCLMHDIGNPPFGHFGEAAINDWFRQRLHPEDAESQPLTDDRCSVAALRLRDGEEPLNELRRKIRQDLCHFEGNAQGIRLVHTLMRMNLTWAQVGGILKYTRPAWWRGETPETHHYLMKKPGYYLSEEAYIARLRKELNLALYSRFPLTWIMEAADDISYCVADLEDAVEKRIFTVEQLYHHLHEAWGQHEKGSLFSLVVENAWEKSRSNSLSRSTEDQFFMYLRVNTLNKLVPYAAQRFIDNLPAIFAGTFNHALLEDASECSDLLKLYKNVAVKHVFSHPDVERLELQGYRVISGLLEIYRPLLSLSLSDFTELVEKERVKRFPIESRLFHKLSTRHRLAYVEAVSKLPSDSPEFPLWEYYYRCRLLQDYISGMTDLYAWDEYRRLMAVEQ</sequence>
<dbReference type="EC" id="3.1.5.1" evidence="1"/>
<dbReference type="EMBL" id="CP000948">
    <property type="protein sequence ID" value="ACB01339.1"/>
    <property type="molecule type" value="Genomic_DNA"/>
</dbReference>
<dbReference type="RefSeq" id="WP_000057073.1">
    <property type="nucleotide sequence ID" value="NC_010473.1"/>
</dbReference>
<dbReference type="SMR" id="B1XD30"/>
<dbReference type="KEGG" id="ecd:ECDH10B_0140"/>
<dbReference type="HOGENOM" id="CLU_028163_2_1_6"/>
<dbReference type="GO" id="GO:0008832">
    <property type="term" value="F:dGTPase activity"/>
    <property type="evidence" value="ECO:0007669"/>
    <property type="project" value="UniProtKB-UniRule"/>
</dbReference>
<dbReference type="GO" id="GO:0000287">
    <property type="term" value="F:magnesium ion binding"/>
    <property type="evidence" value="ECO:0007669"/>
    <property type="project" value="UniProtKB-UniRule"/>
</dbReference>
<dbReference type="GO" id="GO:0006203">
    <property type="term" value="P:dGTP catabolic process"/>
    <property type="evidence" value="ECO:0007669"/>
    <property type="project" value="InterPro"/>
</dbReference>
<dbReference type="CDD" id="cd00077">
    <property type="entry name" value="HDc"/>
    <property type="match status" value="1"/>
</dbReference>
<dbReference type="FunFam" id="1.10.3210.10:FF:000009">
    <property type="entry name" value="Deoxyguanosinetriphosphate triphosphohydrolase"/>
    <property type="match status" value="1"/>
</dbReference>
<dbReference type="FunFam" id="1.10.3210.10:FF:000010">
    <property type="entry name" value="Deoxyguanosinetriphosphate triphosphohydrolase"/>
    <property type="match status" value="1"/>
</dbReference>
<dbReference type="FunFam" id="1.10.3410.10:FF:000001">
    <property type="entry name" value="Deoxyguanosinetriphosphate triphosphohydrolase"/>
    <property type="match status" value="1"/>
</dbReference>
<dbReference type="Gene3D" id="1.10.3210.10">
    <property type="entry name" value="Hypothetical protein af1432"/>
    <property type="match status" value="2"/>
</dbReference>
<dbReference type="Gene3D" id="1.10.3410.10">
    <property type="entry name" value="putative deoxyguanosinetriphosphate triphosphohydrolase like domain"/>
    <property type="match status" value="1"/>
</dbReference>
<dbReference type="HAMAP" id="MF_00030">
    <property type="entry name" value="dGTPase_type1"/>
    <property type="match status" value="1"/>
</dbReference>
<dbReference type="InterPro" id="IPR023293">
    <property type="entry name" value="dGTP_triP_hydro_central_sf"/>
</dbReference>
<dbReference type="InterPro" id="IPR006261">
    <property type="entry name" value="dGTPase"/>
</dbReference>
<dbReference type="InterPro" id="IPR050135">
    <property type="entry name" value="dGTPase-like"/>
</dbReference>
<dbReference type="InterPro" id="IPR020779">
    <property type="entry name" value="dNTPase_1"/>
</dbReference>
<dbReference type="InterPro" id="IPR003607">
    <property type="entry name" value="HD/PDEase_dom"/>
</dbReference>
<dbReference type="InterPro" id="IPR006674">
    <property type="entry name" value="HD_domain"/>
</dbReference>
<dbReference type="NCBIfam" id="TIGR01353">
    <property type="entry name" value="dGTP_triPase"/>
    <property type="match status" value="1"/>
</dbReference>
<dbReference type="NCBIfam" id="NF003429">
    <property type="entry name" value="PRK04926.1"/>
    <property type="match status" value="1"/>
</dbReference>
<dbReference type="PANTHER" id="PTHR11373:SF32">
    <property type="entry name" value="DEOXYGUANOSINETRIPHOSPHATE TRIPHOSPHOHYDROLASE"/>
    <property type="match status" value="1"/>
</dbReference>
<dbReference type="PANTHER" id="PTHR11373">
    <property type="entry name" value="DEOXYNUCLEOSIDE TRIPHOSPHATE TRIPHOSPHOHYDROLASE"/>
    <property type="match status" value="1"/>
</dbReference>
<dbReference type="Pfam" id="PF01966">
    <property type="entry name" value="HD"/>
    <property type="match status" value="1"/>
</dbReference>
<dbReference type="SMART" id="SM00471">
    <property type="entry name" value="HDc"/>
    <property type="match status" value="1"/>
</dbReference>
<dbReference type="SUPFAM" id="SSF109604">
    <property type="entry name" value="HD-domain/PDEase-like"/>
    <property type="match status" value="1"/>
</dbReference>
<dbReference type="PROSITE" id="PS51831">
    <property type="entry name" value="HD"/>
    <property type="match status" value="1"/>
</dbReference>
<proteinExistence type="inferred from homology"/>
<comment type="function">
    <text evidence="1">dGTPase preferentially hydrolyzes dGTP over the other canonical NTPs.</text>
</comment>
<comment type="catalytic activity">
    <reaction evidence="1">
        <text>dGTP + H2O = 2'-deoxyguanosine + triphosphate + H(+)</text>
        <dbReference type="Rhea" id="RHEA:15193"/>
        <dbReference type="ChEBI" id="CHEBI:15377"/>
        <dbReference type="ChEBI" id="CHEBI:15378"/>
        <dbReference type="ChEBI" id="CHEBI:17172"/>
        <dbReference type="ChEBI" id="CHEBI:18036"/>
        <dbReference type="ChEBI" id="CHEBI:61429"/>
        <dbReference type="EC" id="3.1.5.1"/>
    </reaction>
</comment>
<comment type="cofactor">
    <cofactor evidence="1">
        <name>Mg(2+)</name>
        <dbReference type="ChEBI" id="CHEBI:18420"/>
    </cofactor>
</comment>
<comment type="subunit">
    <text evidence="1">Homotetramer.</text>
</comment>
<comment type="similarity">
    <text evidence="1">Belongs to the dGTPase family. Type 1 subfamily.</text>
</comment>
<reference key="1">
    <citation type="journal article" date="2008" name="J. Bacteriol.">
        <title>The complete genome sequence of Escherichia coli DH10B: insights into the biology of a laboratory workhorse.</title>
        <authorList>
            <person name="Durfee T."/>
            <person name="Nelson R."/>
            <person name="Baldwin S."/>
            <person name="Plunkett G. III"/>
            <person name="Burland V."/>
            <person name="Mau B."/>
            <person name="Petrosino J.F."/>
            <person name="Qin X."/>
            <person name="Muzny D.M."/>
            <person name="Ayele M."/>
            <person name="Gibbs R.A."/>
            <person name="Csorgo B."/>
            <person name="Posfai G."/>
            <person name="Weinstock G.M."/>
            <person name="Blattner F.R."/>
        </authorList>
    </citation>
    <scope>NUCLEOTIDE SEQUENCE [LARGE SCALE GENOMIC DNA]</scope>
    <source>
        <strain>K12 / DH10B</strain>
    </source>
</reference>
<organism>
    <name type="scientific">Escherichia coli (strain K12 / DH10B)</name>
    <dbReference type="NCBI Taxonomy" id="316385"/>
    <lineage>
        <taxon>Bacteria</taxon>
        <taxon>Pseudomonadati</taxon>
        <taxon>Pseudomonadota</taxon>
        <taxon>Gammaproteobacteria</taxon>
        <taxon>Enterobacterales</taxon>
        <taxon>Enterobacteriaceae</taxon>
        <taxon>Escherichia</taxon>
    </lineage>
</organism>